<gene>
    <name type="ORF">DDB_G0288475</name>
</gene>
<dbReference type="EMBL" id="AAFI02000111">
    <property type="protein sequence ID" value="EAL63209.1"/>
    <property type="molecule type" value="Genomic_DNA"/>
</dbReference>
<dbReference type="RefSeq" id="XP_636711.1">
    <property type="nucleotide sequence ID" value="XM_631619.1"/>
</dbReference>
<dbReference type="SMR" id="Q54IW5"/>
<dbReference type="GlyGen" id="Q54IW5">
    <property type="glycosylation" value="9 sites"/>
</dbReference>
<dbReference type="PaxDb" id="44689-DDB0252587"/>
<dbReference type="EnsemblProtists" id="EAL63209">
    <property type="protein sequence ID" value="EAL63209"/>
    <property type="gene ID" value="DDB_G0288475"/>
</dbReference>
<dbReference type="GeneID" id="8626643"/>
<dbReference type="KEGG" id="ddi:DDB_G0288475"/>
<dbReference type="dictyBase" id="DDB_G0288475"/>
<dbReference type="VEuPathDB" id="AmoebaDB:DDB_G0288475"/>
<dbReference type="eggNOG" id="ENOG502RST3">
    <property type="taxonomic scope" value="Eukaryota"/>
</dbReference>
<dbReference type="HOGENOM" id="CLU_005143_0_0_1"/>
<dbReference type="InParanoid" id="Q54IW5"/>
<dbReference type="OMA" id="HWHDPTI"/>
<dbReference type="PhylomeDB" id="Q54IW5"/>
<dbReference type="PRO" id="PR:Q54IW5"/>
<dbReference type="Proteomes" id="UP000002195">
    <property type="component" value="Chromosome 5"/>
</dbReference>
<dbReference type="GO" id="GO:0005576">
    <property type="term" value="C:extracellular region"/>
    <property type="evidence" value="ECO:0007669"/>
    <property type="project" value="UniProtKB-SubCell"/>
</dbReference>
<dbReference type="InterPro" id="IPR055401">
    <property type="entry name" value="CEMIP_beta-hel_dom"/>
</dbReference>
<dbReference type="InterPro" id="IPR019316">
    <property type="entry name" value="G8_domain"/>
</dbReference>
<dbReference type="InterPro" id="IPR052334">
    <property type="entry name" value="G8_domain-comF-like"/>
</dbReference>
<dbReference type="PANTHER" id="PTHR47687:SF4">
    <property type="entry name" value="G8 DOMAIN-CONTAINING PROTEIN DDB_G0286311-RELATED"/>
    <property type="match status" value="1"/>
</dbReference>
<dbReference type="PANTHER" id="PTHR47687">
    <property type="entry name" value="G8 DOMAIN-CONTAINING PROTEIN DDB_G0288475-RELATED"/>
    <property type="match status" value="1"/>
</dbReference>
<dbReference type="Pfam" id="PF24606">
    <property type="entry name" value="CEMIP_beta-hel"/>
    <property type="match status" value="1"/>
</dbReference>
<dbReference type="Pfam" id="PF10162">
    <property type="entry name" value="G8"/>
    <property type="match status" value="1"/>
</dbReference>
<dbReference type="SMART" id="SM01225">
    <property type="entry name" value="G8"/>
    <property type="match status" value="1"/>
</dbReference>
<dbReference type="PROSITE" id="PS51484">
    <property type="entry name" value="G8"/>
    <property type="match status" value="1"/>
</dbReference>
<protein>
    <recommendedName>
        <fullName>G8 domain-containing protein DDB_G0288475</fullName>
    </recommendedName>
</protein>
<reference key="1">
    <citation type="journal article" date="2005" name="Nature">
        <title>The genome of the social amoeba Dictyostelium discoideum.</title>
        <authorList>
            <person name="Eichinger L."/>
            <person name="Pachebat J.A."/>
            <person name="Gloeckner G."/>
            <person name="Rajandream M.A."/>
            <person name="Sucgang R."/>
            <person name="Berriman M."/>
            <person name="Song J."/>
            <person name="Olsen R."/>
            <person name="Szafranski K."/>
            <person name="Xu Q."/>
            <person name="Tunggal B."/>
            <person name="Kummerfeld S."/>
            <person name="Madera M."/>
            <person name="Konfortov B.A."/>
            <person name="Rivero F."/>
            <person name="Bankier A.T."/>
            <person name="Lehmann R."/>
            <person name="Hamlin N."/>
            <person name="Davies R."/>
            <person name="Gaudet P."/>
            <person name="Fey P."/>
            <person name="Pilcher K."/>
            <person name="Chen G."/>
            <person name="Saunders D."/>
            <person name="Sodergren E.J."/>
            <person name="Davis P."/>
            <person name="Kerhornou A."/>
            <person name="Nie X."/>
            <person name="Hall N."/>
            <person name="Anjard C."/>
            <person name="Hemphill L."/>
            <person name="Bason N."/>
            <person name="Farbrother P."/>
            <person name="Desany B."/>
            <person name="Just E."/>
            <person name="Morio T."/>
            <person name="Rost R."/>
            <person name="Churcher C.M."/>
            <person name="Cooper J."/>
            <person name="Haydock S."/>
            <person name="van Driessche N."/>
            <person name="Cronin A."/>
            <person name="Goodhead I."/>
            <person name="Muzny D.M."/>
            <person name="Mourier T."/>
            <person name="Pain A."/>
            <person name="Lu M."/>
            <person name="Harper D."/>
            <person name="Lindsay R."/>
            <person name="Hauser H."/>
            <person name="James K.D."/>
            <person name="Quiles M."/>
            <person name="Madan Babu M."/>
            <person name="Saito T."/>
            <person name="Buchrieser C."/>
            <person name="Wardroper A."/>
            <person name="Felder M."/>
            <person name="Thangavelu M."/>
            <person name="Johnson D."/>
            <person name="Knights A."/>
            <person name="Loulseged H."/>
            <person name="Mungall K.L."/>
            <person name="Oliver K."/>
            <person name="Price C."/>
            <person name="Quail M.A."/>
            <person name="Urushihara H."/>
            <person name="Hernandez J."/>
            <person name="Rabbinowitsch E."/>
            <person name="Steffen D."/>
            <person name="Sanders M."/>
            <person name="Ma J."/>
            <person name="Kohara Y."/>
            <person name="Sharp S."/>
            <person name="Simmonds M.N."/>
            <person name="Spiegler S."/>
            <person name="Tivey A."/>
            <person name="Sugano S."/>
            <person name="White B."/>
            <person name="Walker D."/>
            <person name="Woodward J.R."/>
            <person name="Winckler T."/>
            <person name="Tanaka Y."/>
            <person name="Shaulsky G."/>
            <person name="Schleicher M."/>
            <person name="Weinstock G.M."/>
            <person name="Rosenthal A."/>
            <person name="Cox E.C."/>
            <person name="Chisholm R.L."/>
            <person name="Gibbs R.A."/>
            <person name="Loomis W.F."/>
            <person name="Platzer M."/>
            <person name="Kay R.R."/>
            <person name="Williams J.G."/>
            <person name="Dear P.H."/>
            <person name="Noegel A.A."/>
            <person name="Barrell B.G."/>
            <person name="Kuspa A."/>
        </authorList>
    </citation>
    <scope>NUCLEOTIDE SEQUENCE [LARGE SCALE GENOMIC DNA]</scope>
    <source>
        <strain>AX4</strain>
    </source>
</reference>
<accession>Q54IW5</accession>
<comment type="subcellular location">
    <subcellularLocation>
        <location evidence="3">Secreted</location>
    </subcellularLocation>
</comment>
<comment type="similarity">
    <text evidence="3">Belongs to the comF family.</text>
</comment>
<sequence>MKYSSFLLLFIYIFFILNNINAQSCPSTSSTWRPTMASFVTPTSPSIATIQPQLDFLLGKNNLVFMGQYGYSATSITDGPTGVANSFTMNYDTWGPAMHWLVVKTPVPALKANQNYEFSFGFKLGQVLGSYNKIASISVNFFNPADITDPNGGSQYFVTPAHPAVYSKTVTTGSWTSSTTFAQNIITLTPTVDIGLSIMAIQITRTSQTGPAITTMFVSNMKLSIPSRTVPAPPTNLITKDSELIAIPKPLSSLDAQDSTTCPYLATDLVHWHDPTIWTSGVVPLPSTSSNIIIPAGKKVLISPCSINQTGIYQKITIPATSELIFADASLTMNIQDIYVQGKFIMGTTKCRYNANINIVFNGAMTTVDTIAQYFGSKGIAVASGGFISVHGRQYHNTWTKLAATAWSGDNVIYIQDDVNWIVGQQVVVATSVYQDEKYPENEVMTIAAIQGKVIQFTEPLKYYHYGGQEYQAEVALLTRNIVFQSESSSAASSFGGHVLVSGEGQFAGIQLIRMGQRNIKGRYPLHFHMANTVSKSYISDCSVVSSYYRCYTIHATNNVTVTRNVAFDVNGHCYYLEDGVEMDNTLSFNFASYVHTIGTPAAGYNQYGQDFTQSSSLAQPADVAAGGFYITNAWNSFIGNAASGGWAGFSFPNLDAPIGNSINVPIVPKQFTTKVFQGNTAHSSGYFFEFGSSIYVGGDLSTGSDGLLVYNSGRISRETYLNGVESGGEIWMRFNNTKVYLSNRGIGMWGERVEVILLESHDSIRPGSLFGEAWLSDAIVNGQTGNLLSKTTDYSRQGFQFYDTYVKTILTNIIFRNFVHNPLSTSPEDDNRVIISMTHSDEFKPQFISATKNITIQGTAVSQYIGHRIFDTGSSRQFNFVDYDGTISGRSVPTIFGAHDKWWQFDNTCTYNNDWNSWVCNKGTYEVASVSVEVPGYMDRSGEYDATSNVGYIYLFGSGITDSRRMNVTRNVGITGISDFGWYLYWTVGTPSYIKLWLSEVPYGHYVFFAIPYPASTTFKVSCEYKYNSQHSYNFTQATSAAAVRSGDGKKYYFNGTHLFVKVINFVLNGSEYFSRGGAKINDVYWEFIVHITATNTVKPPVNGFYTGLTDVLPSSTL</sequence>
<name>Y8475_DICDI</name>
<keyword id="KW-0325">Glycoprotein</keyword>
<keyword id="KW-1185">Reference proteome</keyword>
<keyword id="KW-0964">Secreted</keyword>
<keyword id="KW-0732">Signal</keyword>
<evidence type="ECO:0000255" key="1"/>
<evidence type="ECO:0000255" key="2">
    <source>
        <dbReference type="PROSITE-ProRule" id="PRU00817"/>
    </source>
</evidence>
<evidence type="ECO:0000305" key="3"/>
<organism>
    <name type="scientific">Dictyostelium discoideum</name>
    <name type="common">Social amoeba</name>
    <dbReference type="NCBI Taxonomy" id="44689"/>
    <lineage>
        <taxon>Eukaryota</taxon>
        <taxon>Amoebozoa</taxon>
        <taxon>Evosea</taxon>
        <taxon>Eumycetozoa</taxon>
        <taxon>Dictyostelia</taxon>
        <taxon>Dictyosteliales</taxon>
        <taxon>Dictyosteliaceae</taxon>
        <taxon>Dictyostelium</taxon>
    </lineage>
</organism>
<proteinExistence type="inferred from homology"/>
<feature type="signal peptide" evidence="1">
    <location>
        <begin position="1"/>
        <end position="22"/>
    </location>
</feature>
<feature type="chain" id="PRO_0000393592" description="G8 domain-containing protein DDB_G0288475">
    <location>
        <begin position="23"/>
        <end position="1119"/>
    </location>
</feature>
<feature type="domain" description="G8" evidence="2">
    <location>
        <begin position="276"/>
        <end position="404"/>
    </location>
</feature>
<feature type="glycosylation site" description="N-linked (GlcNAc...) asparagine" evidence="1">
    <location>
        <position position="308"/>
    </location>
</feature>
<feature type="glycosylation site" description="N-linked (GlcNAc...) asparagine" evidence="1">
    <location>
        <position position="559"/>
    </location>
</feature>
<feature type="glycosylation site" description="N-linked (GlcNAc...) asparagine" evidence="1">
    <location>
        <position position="736"/>
    </location>
</feature>
<feature type="glycosylation site" description="N-linked (GlcNAc...) asparagine" evidence="1">
    <location>
        <position position="854"/>
    </location>
</feature>
<feature type="glycosylation site" description="N-linked (GlcNAc...) asparagine" evidence="1">
    <location>
        <position position="968"/>
    </location>
</feature>
<feature type="glycosylation site" description="N-linked (GlcNAc...) asparagine" evidence="1">
    <location>
        <position position="1035"/>
    </location>
</feature>
<feature type="glycosylation site" description="N-linked (GlcNAc...) asparagine" evidence="1">
    <location>
        <position position="1056"/>
    </location>
</feature>
<feature type="glycosylation site" description="N-linked (GlcNAc...) asparagine" evidence="1">
    <location>
        <position position="1070"/>
    </location>
</feature>